<name>LONF1_HUMAN</name>
<accession>Q17RB8</accession>
<accession>B4DM29</accession>
<accession>B4DU84</accession>
<accession>Q8TEA0</accession>
<accession>Q9BSV1</accession>
<protein>
    <recommendedName>
        <fullName>LON peptidase N-terminal domain and RING finger protein 1</fullName>
    </recommendedName>
    <alternativeName>
        <fullName>RING finger protein 191</fullName>
    </alternativeName>
</protein>
<proteinExistence type="evidence at protein level"/>
<gene>
    <name type="primary">LONRF1</name>
    <name type="synonym">RNF191</name>
</gene>
<comment type="interaction">
    <interactant intactId="EBI-2341787">
        <id>Q17RB8</id>
    </interactant>
    <interactant intactId="EBI-10173507">
        <id>Q6UY14-3</id>
        <label>ADAMTSL4</label>
    </interactant>
    <organismsDiffer>false</organismsDiffer>
    <experiments>6</experiments>
</comment>
<comment type="interaction">
    <interactant intactId="EBI-2341787">
        <id>Q17RB8</id>
    </interactant>
    <interactant intactId="EBI-3905054">
        <id>P13196</id>
        <label>ALAS1</label>
    </interactant>
    <organismsDiffer>false</organismsDiffer>
    <experiments>6</experiments>
</comment>
<comment type="interaction">
    <interactant intactId="EBI-2341787">
        <id>Q17RB8</id>
    </interactant>
    <interactant intactId="EBI-11529439">
        <id>P63010-2</id>
        <label>AP2B1</label>
    </interactant>
    <organismsDiffer>false</organismsDiffer>
    <experiments>3</experiments>
</comment>
<comment type="interaction">
    <interactant intactId="EBI-2341787">
        <id>Q17RB8</id>
    </interactant>
    <interactant intactId="EBI-727146">
        <id>Q7Z3C6</id>
        <label>ATG9A</label>
    </interactant>
    <organismsDiffer>false</organismsDiffer>
    <experiments>3</experiments>
</comment>
<comment type="interaction">
    <interactant intactId="EBI-2341787">
        <id>Q17RB8</id>
    </interactant>
    <interactant intactId="EBI-8640233">
        <id>Q5T686</id>
        <label>AVPI1</label>
    </interactant>
    <organismsDiffer>false</organismsDiffer>
    <experiments>3</experiments>
</comment>
<comment type="interaction">
    <interactant intactId="EBI-2341787">
        <id>Q17RB8</id>
    </interactant>
    <interactant intactId="EBI-358049">
        <id>Q13895</id>
        <label>BYSL</label>
    </interactant>
    <organismsDiffer>false</organismsDiffer>
    <experiments>8</experiments>
</comment>
<comment type="interaction">
    <interactant intactId="EBI-2341787">
        <id>Q17RB8</id>
    </interactant>
    <interactant intactId="EBI-715110">
        <id>Q53FE4</id>
        <label>C4orf17</label>
    </interactant>
    <organismsDiffer>false</organismsDiffer>
    <experiments>3</experiments>
</comment>
<comment type="interaction">
    <interactant intactId="EBI-2341787">
        <id>Q17RB8</id>
    </interactant>
    <interactant intactId="EBI-739580">
        <id>Q13137</id>
        <label>CALCOCO2</label>
    </interactant>
    <organismsDiffer>false</organismsDiffer>
    <experiments>3</experiments>
</comment>
<comment type="interaction">
    <interactant intactId="EBI-2341787">
        <id>Q17RB8</id>
    </interactant>
    <interactant intactId="EBI-12196065">
        <id>Q8N7E2</id>
        <label>CBLL2</label>
    </interactant>
    <organismsDiffer>false</organismsDiffer>
    <experiments>3</experiments>
</comment>
<comment type="interaction">
    <interactant intactId="EBI-2341787">
        <id>Q17RB8</id>
    </interactant>
    <interactant intactId="EBI-745859">
        <id>P55273</id>
        <label>CDKN2D</label>
    </interactant>
    <organismsDiffer>false</organismsDiffer>
    <experiments>3</experiments>
</comment>
<comment type="interaction">
    <interactant intactId="EBI-2341787">
        <id>Q17RB8</id>
    </interactant>
    <interactant intactId="EBI-9038570">
        <id>P27918</id>
        <label>CFP</label>
    </interactant>
    <organismsDiffer>false</organismsDiffer>
    <experiments>3</experiments>
</comment>
<comment type="interaction">
    <interactant intactId="EBI-2341787">
        <id>Q17RB8</id>
    </interactant>
    <interactant intactId="EBI-748171">
        <id>O43186</id>
        <label>CRX</label>
    </interactant>
    <organismsDiffer>false</organismsDiffer>
    <experiments>5</experiments>
</comment>
<comment type="interaction">
    <interactant intactId="EBI-2341787">
        <id>Q17RB8</id>
    </interactant>
    <interactant intactId="EBI-3867333">
        <id>A8MQ03</id>
        <label>CYSRT1</label>
    </interactant>
    <organismsDiffer>false</organismsDiffer>
    <experiments>3</experiments>
</comment>
<comment type="interaction">
    <interactant intactId="EBI-2341787">
        <id>Q17RB8</id>
    </interactant>
    <interactant intactId="EBI-739789">
        <id>Q92997</id>
        <label>DVL3</label>
    </interactant>
    <organismsDiffer>false</organismsDiffer>
    <experiments>3</experiments>
</comment>
<comment type="interaction">
    <interactant intactId="EBI-2341787">
        <id>Q17RB8</id>
    </interactant>
    <interactant intactId="EBI-2349927">
        <id>Q5JST6</id>
        <label>EFHC2</label>
    </interactant>
    <organismsDiffer>false</organismsDiffer>
    <experiments>6</experiments>
</comment>
<comment type="interaction">
    <interactant intactId="EBI-2341787">
        <id>Q17RB8</id>
    </interactant>
    <interactant intactId="EBI-11533409">
        <id>Q96Q35-2</id>
        <label>FLACC1</label>
    </interactant>
    <organismsDiffer>false</organismsDiffer>
    <experiments>3</experiments>
</comment>
<comment type="interaction">
    <interactant intactId="EBI-2341787">
        <id>Q17RB8</id>
    </interactant>
    <interactant intactId="EBI-8468945">
        <id>Q8TAK5</id>
        <label>GABPB2</label>
    </interactant>
    <organismsDiffer>false</organismsDiffer>
    <experiments>3</experiments>
</comment>
<comment type="interaction">
    <interactant intactId="EBI-2341787">
        <id>Q17RB8</id>
    </interactant>
    <interactant intactId="EBI-2561458">
        <id>Q9BQQ3</id>
        <label>GORASP1</label>
    </interactant>
    <organismsDiffer>false</organismsDiffer>
    <experiments>6</experiments>
</comment>
<comment type="interaction">
    <interactant intactId="EBI-2341787">
        <id>Q17RB8</id>
    </interactant>
    <interactant intactId="EBI-739467">
        <id>Q9H8Y8</id>
        <label>GORASP2</label>
    </interactant>
    <organismsDiffer>false</organismsDiffer>
    <experiments>10</experiments>
</comment>
<comment type="interaction">
    <interactant intactId="EBI-2341787">
        <id>Q17RB8</id>
    </interactant>
    <interactant intactId="EBI-11519926">
        <id>Q6PI77</id>
        <label>GPRASP3</label>
    </interactant>
    <organismsDiffer>false</organismsDiffer>
    <experiments>3</experiments>
</comment>
<comment type="interaction">
    <interactant intactId="EBI-2341787">
        <id>Q17RB8</id>
    </interactant>
    <interactant intactId="EBI-6678255">
        <id>Q14774</id>
        <label>HLX</label>
    </interactant>
    <organismsDiffer>false</organismsDiffer>
    <experiments>3</experiments>
</comment>
<comment type="interaction">
    <interactant intactId="EBI-2341787">
        <id>Q17RB8</id>
    </interactant>
    <interactant intactId="EBI-740785">
        <id>P49639</id>
        <label>HOXA1</label>
    </interactant>
    <organismsDiffer>false</organismsDiffer>
    <experiments>3</experiments>
</comment>
<comment type="interaction">
    <interactant intactId="EBI-2341787">
        <id>Q17RB8</id>
    </interactant>
    <interactant intactId="EBI-8638439">
        <id>Q8IYA8</id>
        <label>IHO1</label>
    </interactant>
    <organismsDiffer>false</organismsDiffer>
    <experiments>6</experiments>
</comment>
<comment type="interaction">
    <interactant intactId="EBI-2341787">
        <id>Q17RB8</id>
    </interactant>
    <interactant intactId="EBI-3893057">
        <id>Q9UKS7</id>
        <label>IKZF2</label>
    </interactant>
    <organismsDiffer>false</organismsDiffer>
    <experiments>3</experiments>
</comment>
<comment type="interaction">
    <interactant intactId="EBI-2341787">
        <id>Q17RB8</id>
    </interactant>
    <interactant intactId="EBI-747204">
        <id>Q9UKT9</id>
        <label>IKZF3</label>
    </interactant>
    <organismsDiffer>false</organismsDiffer>
    <experiments>3</experiments>
</comment>
<comment type="interaction">
    <interactant intactId="EBI-2341787">
        <id>Q17RB8</id>
    </interactant>
    <interactant intactId="EBI-10238842">
        <id>Q8IXL9</id>
        <label>IQCF2</label>
    </interactant>
    <organismsDiffer>false</organismsDiffer>
    <experiments>3</experiments>
</comment>
<comment type="interaction">
    <interactant intactId="EBI-2341787">
        <id>Q17RB8</id>
    </interactant>
    <interactant intactId="EBI-399080">
        <id>Q92993</id>
        <label>KAT5</label>
    </interactant>
    <organismsDiffer>false</organismsDiffer>
    <experiments>3</experiments>
</comment>
<comment type="interaction">
    <interactant intactId="EBI-2341787">
        <id>Q17RB8</id>
    </interactant>
    <interactant intactId="EBI-715394">
        <id>Q9H079</id>
        <label>KATNBL1</label>
    </interactant>
    <organismsDiffer>false</organismsDiffer>
    <experiments>3</experiments>
</comment>
<comment type="interaction">
    <interactant intactId="EBI-2341787">
        <id>Q17RB8</id>
    </interactant>
    <interactant intactId="EBI-11976683">
        <id>Q4G0X4</id>
        <label>KCTD21</label>
    </interactant>
    <organismsDiffer>false</organismsDiffer>
    <experiments>3</experiments>
</comment>
<comment type="interaction">
    <interactant intactId="EBI-2341787">
        <id>Q17RB8</id>
    </interactant>
    <interactant intactId="EBI-4397613">
        <id>Q7L273</id>
        <label>KCTD9</label>
    </interactant>
    <organismsDiffer>false</organismsDiffer>
    <experiments>6</experiments>
</comment>
<comment type="interaction">
    <interactant intactId="EBI-2341787">
        <id>Q17RB8</id>
    </interactant>
    <interactant intactId="EBI-948001">
        <id>Q15323</id>
        <label>KRT31</label>
    </interactant>
    <organismsDiffer>false</organismsDiffer>
    <experiments>6</experiments>
</comment>
<comment type="interaction">
    <interactant intactId="EBI-2341787">
        <id>Q17RB8</id>
    </interactant>
    <interactant intactId="EBI-1058674">
        <id>Q92764</id>
        <label>KRT35</label>
    </interactant>
    <organismsDiffer>false</organismsDiffer>
    <experiments>3</experiments>
</comment>
<comment type="interaction">
    <interactant intactId="EBI-2341787">
        <id>Q17RB8</id>
    </interactant>
    <interactant intactId="EBI-2949715">
        <id>O95678</id>
        <label>KRT75</label>
    </interactant>
    <organismsDiffer>false</organismsDiffer>
    <experiments>3</experiments>
</comment>
<comment type="interaction">
    <interactant intactId="EBI-2341787">
        <id>Q17RB8</id>
    </interactant>
    <interactant intactId="EBI-11749135">
        <id>Q8IUG1</id>
        <label>KRTAP1-3</label>
    </interactant>
    <organismsDiffer>false</organismsDiffer>
    <experiments>3</experiments>
</comment>
<comment type="interaction">
    <interactant intactId="EBI-2341787">
        <id>Q17RB8</id>
    </interactant>
    <interactant intactId="EBI-10241252">
        <id>Q3SY46</id>
        <label>KRTAP13-3</label>
    </interactant>
    <organismsDiffer>false</organismsDiffer>
    <experiments>3</experiments>
</comment>
<comment type="interaction">
    <interactant intactId="EBI-2341787">
        <id>Q17RB8</id>
    </interactant>
    <interactant intactId="EBI-12805508">
        <id>Q3LI70</id>
        <label>KRTAP19-6</label>
    </interactant>
    <organismsDiffer>false</organismsDiffer>
    <experiments>3</experiments>
</comment>
<comment type="interaction">
    <interactant intactId="EBI-2341787">
        <id>Q17RB8</id>
    </interactant>
    <interactant intactId="EBI-10241353">
        <id>Q3SYF9</id>
        <label>KRTAP19-7</label>
    </interactant>
    <organismsDiffer>false</organismsDiffer>
    <experiments>3</experiments>
</comment>
<comment type="interaction">
    <interactant intactId="EBI-2341787">
        <id>Q17RB8</id>
    </interactant>
    <interactant intactId="EBI-3957694">
        <id>Q9BYR6</id>
        <label>KRTAP3-3</label>
    </interactant>
    <organismsDiffer>false</organismsDiffer>
    <experiments>3</experiments>
</comment>
<comment type="interaction">
    <interactant intactId="EBI-2341787">
        <id>Q17RB8</id>
    </interactant>
    <interactant intactId="EBI-12111050">
        <id>Q3LI64</id>
        <label>KRTAP6-1</label>
    </interactant>
    <organismsDiffer>false</organismsDiffer>
    <experiments>3</experiments>
</comment>
<comment type="interaction">
    <interactant intactId="EBI-2341787">
        <id>Q17RB8</id>
    </interactant>
    <interactant intactId="EBI-10240775">
        <id>Q3B8N2</id>
        <label>LGALS9B</label>
    </interactant>
    <organismsDiffer>false</organismsDiffer>
    <experiments>3</experiments>
</comment>
<comment type="interaction">
    <interactant intactId="EBI-2341787">
        <id>Q17RB8</id>
    </interactant>
    <interactant intactId="EBI-12179869">
        <id>P50458</id>
        <label>LHX2</label>
    </interactant>
    <organismsDiffer>false</organismsDiffer>
    <experiments>3</experiments>
</comment>
<comment type="interaction">
    <interactant intactId="EBI-2341787">
        <id>Q17RB8</id>
    </interactant>
    <interactant intactId="EBI-2865388">
        <id>Q969G2</id>
        <label>LHX4</label>
    </interactant>
    <organismsDiffer>false</organismsDiffer>
    <experiments>3</experiments>
</comment>
<comment type="interaction">
    <interactant intactId="EBI-2341787">
        <id>Q17RB8</id>
    </interactant>
    <interactant intactId="EBI-739832">
        <id>Q8TBB1</id>
        <label>LNX1</label>
    </interactant>
    <organismsDiffer>false</organismsDiffer>
    <experiments>3</experiments>
</comment>
<comment type="interaction">
    <interactant intactId="EBI-2341787">
        <id>Q17RB8</id>
    </interactant>
    <interactant intactId="EBI-716006">
        <id>Q9Y5V3</id>
        <label>MAGED1</label>
    </interactant>
    <organismsDiffer>false</organismsDiffer>
    <experiments>3</experiments>
</comment>
<comment type="interaction">
    <interactant intactId="EBI-2341787">
        <id>Q17RB8</id>
    </interactant>
    <interactant intactId="EBI-10172526">
        <id>Q9UJV3-2</id>
        <label>MID2</label>
    </interactant>
    <organismsDiffer>false</organismsDiffer>
    <experiments>3</experiments>
</comment>
<comment type="interaction">
    <interactant intactId="EBI-2341787">
        <id>Q17RB8</id>
    </interactant>
    <interactant intactId="EBI-720441">
        <id>Q96DV4</id>
        <label>MRPL38</label>
    </interactant>
    <organismsDiffer>false</organismsDiffer>
    <experiments>3</experiments>
</comment>
<comment type="interaction">
    <interactant intactId="EBI-2341787">
        <id>Q17RB8</id>
    </interactant>
    <interactant intactId="EBI-371938">
        <id>Q13615</id>
        <label>MTMR3</label>
    </interactant>
    <organismsDiffer>false</organismsDiffer>
    <experiments>3</experiments>
</comment>
<comment type="interaction">
    <interactant intactId="EBI-2341787">
        <id>Q17RB8</id>
    </interactant>
    <interactant intactId="EBI-5662487">
        <id>Q8TDC0</id>
        <label>MYOZ3</label>
    </interactant>
    <organismsDiffer>false</organismsDiffer>
    <experiments>3</experiments>
</comment>
<comment type="interaction">
    <interactant intactId="EBI-2341787">
        <id>Q17RB8</id>
    </interactant>
    <interactant intactId="EBI-721550">
        <id>P22736</id>
        <label>NR4A1</label>
    </interactant>
    <organismsDiffer>false</organismsDiffer>
    <experiments>3</experiments>
</comment>
<comment type="interaction">
    <interactant intactId="EBI-2341787">
        <id>Q17RB8</id>
    </interactant>
    <interactant intactId="EBI-741158">
        <id>Q96HA8</id>
        <label>NTAQ1</label>
    </interactant>
    <organismsDiffer>false</organismsDiffer>
    <experiments>4</experiments>
</comment>
<comment type="interaction">
    <interactant intactId="EBI-2341787">
        <id>Q17RB8</id>
    </interactant>
    <interactant intactId="EBI-18583589">
        <id>A6NGQ2</id>
        <label>OOEP</label>
    </interactant>
    <organismsDiffer>false</organismsDiffer>
    <experiments>3</experiments>
</comment>
<comment type="interaction">
    <interactant intactId="EBI-2341787">
        <id>Q17RB8</id>
    </interactant>
    <interactant intactId="EBI-11022007">
        <id>Q9HBE1-4</id>
        <label>PATZ1</label>
    </interactant>
    <organismsDiffer>false</organismsDiffer>
    <experiments>3</experiments>
</comment>
<comment type="interaction">
    <interactant intactId="EBI-2341787">
        <id>Q17RB8</id>
    </interactant>
    <interactant intactId="EBI-296331">
        <id>Q02548</id>
        <label>PAX5</label>
    </interactant>
    <organismsDiffer>false</organismsDiffer>
    <experiments>3</experiments>
</comment>
<comment type="interaction">
    <interactant intactId="EBI-2341787">
        <id>Q17RB8</id>
    </interactant>
    <interactant intactId="EBI-747278">
        <id>P26367</id>
        <label>PAX6</label>
    </interactant>
    <organismsDiffer>false</organismsDiffer>
    <experiments>3</experiments>
</comment>
<comment type="interaction">
    <interactant intactId="EBI-2341787">
        <id>Q17RB8</id>
    </interactant>
    <interactant intactId="EBI-2683132">
        <id>Q06710</id>
        <label>PAX8</label>
    </interactant>
    <organismsDiffer>false</organismsDiffer>
    <experiments>3</experiments>
</comment>
<comment type="interaction">
    <interactant intactId="EBI-2341787">
        <id>Q17RB8</id>
    </interactant>
    <interactant intactId="EBI-79165">
        <id>Q9NRD5</id>
        <label>PICK1</label>
    </interactant>
    <organismsDiffer>false</organismsDiffer>
    <experiments>3</experiments>
</comment>
<comment type="interaction">
    <interactant intactId="EBI-2341787">
        <id>Q17RB8</id>
    </interactant>
    <interactant intactId="EBI-10238872">
        <id>Q8WVK1</id>
        <label>PLSCR1</label>
    </interactant>
    <organismsDiffer>false</organismsDiffer>
    <experiments>3</experiments>
</comment>
<comment type="interaction">
    <interactant intactId="EBI-2341787">
        <id>Q17RB8</id>
    </interactant>
    <interactant intactId="EBI-12029004">
        <id>P78424</id>
        <label>POU6F2</label>
    </interactant>
    <organismsDiffer>false</organismsDiffer>
    <experiments>3</experiments>
</comment>
<comment type="interaction">
    <interactant intactId="EBI-2341787">
        <id>Q17RB8</id>
    </interactant>
    <interactant intactId="EBI-2506727">
        <id>Q9UQK1</id>
        <label>PPP1R3C</label>
    </interactant>
    <organismsDiffer>false</organismsDiffer>
    <experiments>3</experiments>
</comment>
<comment type="interaction">
    <interactant intactId="EBI-2341787">
        <id>Q17RB8</id>
    </interactant>
    <interactant intactId="EBI-11320284">
        <id>Q9NQX0</id>
        <label>PRDM6</label>
    </interactant>
    <organismsDiffer>false</organismsDiffer>
    <experiments>3</experiments>
</comment>
<comment type="interaction">
    <interactant intactId="EBI-2341787">
        <id>Q17RB8</id>
    </interactant>
    <interactant intactId="EBI-11986293">
        <id>P0CG20</id>
        <label>PRR35</label>
    </interactant>
    <organismsDiffer>false</organismsDiffer>
    <experiments>3</experiments>
</comment>
<comment type="interaction">
    <interactant intactId="EBI-2341787">
        <id>Q17RB8</id>
    </interactant>
    <interactant intactId="EBI-359352">
        <id>P25786</id>
        <label>PSMA1</label>
    </interactant>
    <organismsDiffer>false</organismsDiffer>
    <experiments>3</experiments>
</comment>
<comment type="interaction">
    <interactant intactId="EBI-2341787">
        <id>Q17RB8</id>
    </interactant>
    <interactant intactId="EBI-740322">
        <id>Q93062</id>
        <label>RBPMS</label>
    </interactant>
    <organismsDiffer>false</organismsDiffer>
    <experiments>3</experiments>
</comment>
<comment type="interaction">
    <interactant intactId="EBI-2341787">
        <id>Q17RB8</id>
    </interactant>
    <interactant intactId="EBI-10182375">
        <id>Q9UFD9</id>
        <label>RIMBP3</label>
    </interactant>
    <organismsDiffer>false</organismsDiffer>
    <experiments>3</experiments>
</comment>
<comment type="interaction">
    <interactant intactId="EBI-2341787">
        <id>Q17RB8</id>
    </interactant>
    <interactant intactId="EBI-12840198">
        <id>Q96P16-3</id>
        <label>RPRD1A</label>
    </interactant>
    <organismsDiffer>false</organismsDiffer>
    <experiments>3</experiments>
</comment>
<comment type="interaction">
    <interactant intactId="EBI-2341787">
        <id>Q17RB8</id>
    </interactant>
    <interactant intactId="EBI-476295">
        <id>P31947</id>
        <label>SFN</label>
    </interactant>
    <organismsDiffer>false</organismsDiffer>
    <experiments>3</experiments>
</comment>
<comment type="interaction">
    <interactant intactId="EBI-2341787">
        <id>Q17RB8</id>
    </interactant>
    <interactant intactId="EBI-750559">
        <id>O95391</id>
        <label>SLU7</label>
    </interactant>
    <organismsDiffer>false</organismsDiffer>
    <experiments>3</experiments>
</comment>
<comment type="interaction">
    <interactant intactId="EBI-2341787">
        <id>Q17RB8</id>
    </interactant>
    <interactant intactId="EBI-742487">
        <id>O43597</id>
        <label>SPRY2</label>
    </interactant>
    <organismsDiffer>false</organismsDiffer>
    <experiments>3</experiments>
</comment>
<comment type="interaction">
    <interactant intactId="EBI-2341787">
        <id>Q17RB8</id>
    </interactant>
    <interactant intactId="EBI-358174">
        <id>O95793</id>
        <label>STAU1</label>
    </interactant>
    <organismsDiffer>false</organismsDiffer>
    <experiments>6</experiments>
</comment>
<comment type="interaction">
    <interactant intactId="EBI-2341787">
        <id>Q17RB8</id>
    </interactant>
    <interactant intactId="EBI-714135">
        <id>O75558</id>
        <label>STX11</label>
    </interactant>
    <organismsDiffer>false</organismsDiffer>
    <experiments>3</experiments>
</comment>
<comment type="interaction">
    <interactant intactId="EBI-2341787">
        <id>Q17RB8</id>
    </interactant>
    <interactant intactId="EBI-745958">
        <id>Q5VWN6</id>
        <label>TASOR2</label>
    </interactant>
    <organismsDiffer>false</organismsDiffer>
    <experiments>3</experiments>
</comment>
<comment type="interaction">
    <interactant intactId="EBI-2341787">
        <id>Q17RB8</id>
    </interactant>
    <interactant intactId="EBI-12096770">
        <id>O60806</id>
        <label>TBX19</label>
    </interactant>
    <organismsDiffer>false</organismsDiffer>
    <experiments>3</experiments>
</comment>
<comment type="interaction">
    <interactant intactId="EBI-2341787">
        <id>Q17RB8</id>
    </interactant>
    <interactant intactId="EBI-355744">
        <id>Q12933</id>
        <label>TRAF2</label>
    </interactant>
    <organismsDiffer>false</organismsDiffer>
    <experiments>3</experiments>
</comment>
<comment type="interaction">
    <interactant intactId="EBI-2341787">
        <id>Q17RB8</id>
    </interactant>
    <interactant intactId="EBI-719493">
        <id>P14373</id>
        <label>TRIM27</label>
    </interactant>
    <organismsDiffer>false</organismsDiffer>
    <experiments>3</experiments>
</comment>
<comment type="interaction">
    <interactant intactId="EBI-2341787">
        <id>Q17RB8</id>
    </interactant>
    <interactant intactId="EBI-5235829">
        <id>Q8IWZ5</id>
        <label>TRIM42</label>
    </interactant>
    <organismsDiffer>false</organismsDiffer>
    <experiments>8</experiments>
</comment>
<comment type="interaction">
    <interactant intactId="EBI-2341787">
        <id>Q17RB8</id>
    </interactant>
    <interactant intactId="EBI-2340370">
        <id>Q9BZR9</id>
        <label>TRIM8</label>
    </interactant>
    <organismsDiffer>false</organismsDiffer>
    <experiments>3</experiments>
</comment>
<comment type="interaction">
    <interactant intactId="EBI-2341787">
        <id>Q17RB8</id>
    </interactant>
    <interactant intactId="EBI-10180829">
        <id>Q7KZS0</id>
        <label>UBE2I</label>
    </interactant>
    <organismsDiffer>false</organismsDiffer>
    <experiments>3</experiments>
</comment>
<comment type="interaction">
    <interactant intactId="EBI-2341787">
        <id>Q17RB8</id>
    </interactant>
    <interactant intactId="EBI-2129974">
        <id>O14933</id>
        <label>UBE2L6</label>
    </interactant>
    <organismsDiffer>false</organismsDiffer>
    <experiments>7</experiments>
</comment>
<comment type="interaction">
    <interactant intactId="EBI-2341787">
        <id>Q17RB8</id>
    </interactant>
    <interactant intactId="EBI-11983165">
        <id>Q99990</id>
        <label>VGLL1</label>
    </interactant>
    <organismsDiffer>false</organismsDiffer>
    <experiments>3</experiments>
</comment>
<comment type="interaction">
    <interactant intactId="EBI-2341787">
        <id>Q17RB8</id>
    </interactant>
    <interactant intactId="EBI-7705033">
        <id>Q9BRX9</id>
        <label>WDR83</label>
    </interactant>
    <organismsDiffer>false</organismsDiffer>
    <experiments>3</experiments>
</comment>
<comment type="interaction">
    <interactant intactId="EBI-2341787">
        <id>Q17RB8</id>
    </interactant>
    <interactant intactId="EBI-517127">
        <id>P98170</id>
        <label>XIAP</label>
    </interactant>
    <organismsDiffer>false</organismsDiffer>
    <experiments>7</experiments>
</comment>
<comment type="interaction">
    <interactant intactId="EBI-2341787">
        <id>Q17RB8</id>
    </interactant>
    <interactant intactId="EBI-11419867">
        <id>Q8TF47</id>
        <label>ZFP90</label>
    </interactant>
    <organismsDiffer>false</organismsDiffer>
    <experiments>3</experiments>
</comment>
<comment type="interaction">
    <interactant intactId="EBI-2341787">
        <id>Q17RB8</id>
    </interactant>
    <interactant intactId="EBI-743265">
        <id>Q9BUY5</id>
        <label>ZNF426</label>
    </interactant>
    <organismsDiffer>false</organismsDiffer>
    <experiments>3</experiments>
</comment>
<comment type="interaction">
    <interactant intactId="EBI-2341787">
        <id>Q17RB8</id>
    </interactant>
    <interactant intactId="EBI-12217757">
        <id>Q96CK0</id>
        <label>ZNF653</label>
    </interactant>
    <organismsDiffer>false</organismsDiffer>
    <experiments>3</experiments>
</comment>
<comment type="interaction">
    <interactant intactId="EBI-2341787">
        <id>Q17RB8</id>
    </interactant>
    <interactant intactId="EBI-10251462">
        <id>Q6NX45</id>
        <label>ZNF774</label>
    </interactant>
    <organismsDiffer>false</organismsDiffer>
    <experiments>3</experiments>
</comment>
<comment type="interaction">
    <interactant intactId="EBI-2341787">
        <id>Q17RB8</id>
    </interactant>
    <interactant intactId="EBI-2557592">
        <id>Q9UHR6</id>
        <label>ZNHIT2</label>
    </interactant>
    <organismsDiffer>false</organismsDiffer>
    <experiments>3</experiments>
</comment>
<comment type="alternative products">
    <event type="alternative splicing"/>
    <isoform>
        <id>Q17RB8-1</id>
        <name>1</name>
        <sequence type="displayed"/>
    </isoform>
    <isoform>
        <id>Q17RB8-2</id>
        <name>2</name>
        <sequence type="described" ref="VSP_037971"/>
    </isoform>
</comment>
<comment type="sequence caution" evidence="6">
    <conflict type="erroneous initiation">
        <sequence resource="EMBL-CDS" id="AAI17382"/>
    </conflict>
</comment>
<comment type="sequence caution" evidence="6">
    <conflict type="erroneous initiation">
        <sequence resource="EMBL-CDS" id="AAI17386"/>
    </conflict>
</comment>
<comment type="sequence caution" evidence="6">
    <conflict type="frameshift">
        <sequence resource="EMBL-CDS" id="BAB85052"/>
    </conflict>
</comment>
<comment type="sequence caution" evidence="6">
    <conflict type="frameshift">
        <sequence resource="EMBL-CDS" id="BAG59741"/>
    </conflict>
</comment>
<comment type="sequence caution" evidence="6">
    <conflict type="erroneous initiation">
        <sequence resource="EMBL-CDS" id="BAG62246"/>
    </conflict>
</comment>
<dbReference type="EMBL" id="AC123777">
    <property type="status" value="NOT_ANNOTATED_CDS"/>
    <property type="molecule type" value="Genomic_DNA"/>
</dbReference>
<dbReference type="EMBL" id="AK074329">
    <property type="protein sequence ID" value="BAB85052.1"/>
    <property type="status" value="ALT_FRAME"/>
    <property type="molecule type" value="mRNA"/>
</dbReference>
<dbReference type="EMBL" id="AK297266">
    <property type="protein sequence ID" value="BAG59741.1"/>
    <property type="status" value="ALT_FRAME"/>
    <property type="molecule type" value="mRNA"/>
</dbReference>
<dbReference type="EMBL" id="AK300538">
    <property type="protein sequence ID" value="BAG62246.1"/>
    <property type="status" value="ALT_INIT"/>
    <property type="molecule type" value="mRNA"/>
</dbReference>
<dbReference type="EMBL" id="BC004538">
    <property type="protein sequence ID" value="AAH04538.2"/>
    <property type="molecule type" value="mRNA"/>
</dbReference>
<dbReference type="EMBL" id="BC117381">
    <property type="protein sequence ID" value="AAI17382.1"/>
    <property type="status" value="ALT_INIT"/>
    <property type="molecule type" value="mRNA"/>
</dbReference>
<dbReference type="EMBL" id="BC117385">
    <property type="protein sequence ID" value="AAI17386.1"/>
    <property type="status" value="ALT_INIT"/>
    <property type="molecule type" value="mRNA"/>
</dbReference>
<dbReference type="CCDS" id="CCDS5987.2">
    <molecule id="Q17RB8-1"/>
</dbReference>
<dbReference type="RefSeq" id="NP_001316905.1">
    <molecule id="Q17RB8-2"/>
    <property type="nucleotide sequence ID" value="NM_001329976.2"/>
</dbReference>
<dbReference type="RefSeq" id="NP_689484.3">
    <molecule id="Q17RB8-1"/>
    <property type="nucleotide sequence ID" value="NM_152271.4"/>
</dbReference>
<dbReference type="SMR" id="Q17RB8"/>
<dbReference type="BioGRID" id="124867">
    <property type="interactions" value="109"/>
</dbReference>
<dbReference type="FunCoup" id="Q17RB8">
    <property type="interactions" value="819"/>
</dbReference>
<dbReference type="IntAct" id="Q17RB8">
    <property type="interactions" value="96"/>
</dbReference>
<dbReference type="STRING" id="9606.ENSP00000381298"/>
<dbReference type="GlyGen" id="Q17RB8">
    <property type="glycosylation" value="1 site, 1 O-linked glycan (1 site)"/>
</dbReference>
<dbReference type="iPTMnet" id="Q17RB8"/>
<dbReference type="PhosphoSitePlus" id="Q17RB8"/>
<dbReference type="BioMuta" id="LONRF1"/>
<dbReference type="DMDM" id="257051033"/>
<dbReference type="jPOST" id="Q17RB8"/>
<dbReference type="MassIVE" id="Q17RB8"/>
<dbReference type="PaxDb" id="9606-ENSP00000381298"/>
<dbReference type="PeptideAtlas" id="Q17RB8"/>
<dbReference type="ProteomicsDB" id="61144">
    <molecule id="Q17RB8-1"/>
</dbReference>
<dbReference type="ProteomicsDB" id="61145">
    <molecule id="Q17RB8-2"/>
</dbReference>
<dbReference type="Antibodypedia" id="8694">
    <property type="antibodies" value="111 antibodies from 21 providers"/>
</dbReference>
<dbReference type="DNASU" id="91694"/>
<dbReference type="Ensembl" id="ENST00000398246.8">
    <molecule id="Q17RB8-1"/>
    <property type="protein sequence ID" value="ENSP00000381298.3"/>
    <property type="gene ID" value="ENSG00000154359.13"/>
</dbReference>
<dbReference type="GeneID" id="91694"/>
<dbReference type="KEGG" id="hsa:91694"/>
<dbReference type="MANE-Select" id="ENST00000398246.8">
    <property type="protein sequence ID" value="ENSP00000381298.3"/>
    <property type="RefSeq nucleotide sequence ID" value="NM_152271.5"/>
    <property type="RefSeq protein sequence ID" value="NP_689484.3"/>
</dbReference>
<dbReference type="UCSC" id="uc003wwd.2">
    <molecule id="Q17RB8-1"/>
    <property type="organism name" value="human"/>
</dbReference>
<dbReference type="AGR" id="HGNC:26302"/>
<dbReference type="CTD" id="91694"/>
<dbReference type="DisGeNET" id="91694"/>
<dbReference type="GeneCards" id="LONRF1"/>
<dbReference type="HGNC" id="HGNC:26302">
    <property type="gene designation" value="LONRF1"/>
</dbReference>
<dbReference type="HPA" id="ENSG00000154359">
    <property type="expression patterns" value="Low tissue specificity"/>
</dbReference>
<dbReference type="neXtProt" id="NX_Q17RB8"/>
<dbReference type="OpenTargets" id="ENSG00000154359"/>
<dbReference type="PharmGKB" id="PA128394743"/>
<dbReference type="VEuPathDB" id="HostDB:ENSG00000154359"/>
<dbReference type="eggNOG" id="KOG4159">
    <property type="taxonomic scope" value="Eukaryota"/>
</dbReference>
<dbReference type="GeneTree" id="ENSGT00440000033329"/>
<dbReference type="InParanoid" id="Q17RB8"/>
<dbReference type="OMA" id="KYKKQGV"/>
<dbReference type="OrthoDB" id="264917at2759"/>
<dbReference type="PAN-GO" id="Q17RB8">
    <property type="GO annotations" value="1 GO annotation based on evolutionary models"/>
</dbReference>
<dbReference type="PhylomeDB" id="Q17RB8"/>
<dbReference type="TreeFam" id="TF327043"/>
<dbReference type="PathwayCommons" id="Q17RB8"/>
<dbReference type="Reactome" id="R-HSA-983168">
    <property type="pathway name" value="Antigen processing: Ubiquitination &amp; Proteasome degradation"/>
</dbReference>
<dbReference type="SignaLink" id="Q17RB8"/>
<dbReference type="SIGNOR" id="Q17RB8"/>
<dbReference type="BioGRID-ORCS" id="91694">
    <property type="hits" value="12 hits in 1190 CRISPR screens"/>
</dbReference>
<dbReference type="ChiTaRS" id="LONRF1">
    <property type="organism name" value="human"/>
</dbReference>
<dbReference type="GenomeRNAi" id="91694"/>
<dbReference type="Pharos" id="Q17RB8">
    <property type="development level" value="Tdark"/>
</dbReference>
<dbReference type="PRO" id="PR:Q17RB8"/>
<dbReference type="Proteomes" id="UP000005640">
    <property type="component" value="Chromosome 8"/>
</dbReference>
<dbReference type="RNAct" id="Q17RB8">
    <property type="molecule type" value="protein"/>
</dbReference>
<dbReference type="Bgee" id="ENSG00000154359">
    <property type="expression patterns" value="Expressed in skin of leg and 98 other cell types or tissues"/>
</dbReference>
<dbReference type="ExpressionAtlas" id="Q17RB8">
    <property type="expression patterns" value="baseline and differential"/>
</dbReference>
<dbReference type="GO" id="GO:0005829">
    <property type="term" value="C:cytosol"/>
    <property type="evidence" value="ECO:0000304"/>
    <property type="project" value="Reactome"/>
</dbReference>
<dbReference type="GO" id="GO:0008270">
    <property type="term" value="F:zinc ion binding"/>
    <property type="evidence" value="ECO:0007669"/>
    <property type="project" value="UniProtKB-KW"/>
</dbReference>
<dbReference type="CDD" id="cd16514">
    <property type="entry name" value="RING-HC_LONFs_rpt2"/>
    <property type="match status" value="1"/>
</dbReference>
<dbReference type="FunFam" id="2.30.130.40:FF:000005">
    <property type="entry name" value="LON peptidase N-terminal domain and ring finger 1"/>
    <property type="match status" value="1"/>
</dbReference>
<dbReference type="FunFam" id="1.25.40.10:FF:000426">
    <property type="entry name" value="LON peptidase N-terminal domain and RING finger protein 1"/>
    <property type="match status" value="1"/>
</dbReference>
<dbReference type="FunFam" id="3.30.40.10:FF:000307">
    <property type="entry name" value="LON peptidase N-terminal domain and RING finger protein 1"/>
    <property type="match status" value="1"/>
</dbReference>
<dbReference type="Gene3D" id="2.30.130.40">
    <property type="entry name" value="LON domain-like"/>
    <property type="match status" value="1"/>
</dbReference>
<dbReference type="Gene3D" id="1.25.40.10">
    <property type="entry name" value="Tetratricopeptide repeat domain"/>
    <property type="match status" value="1"/>
</dbReference>
<dbReference type="Gene3D" id="3.30.40.10">
    <property type="entry name" value="Zinc/RING finger domain, C3HC4 (zinc finger)"/>
    <property type="match status" value="2"/>
</dbReference>
<dbReference type="InterPro" id="IPR003111">
    <property type="entry name" value="Lon_prtase_N"/>
</dbReference>
<dbReference type="InterPro" id="IPR046336">
    <property type="entry name" value="Lon_prtase_N_sf"/>
</dbReference>
<dbReference type="InterPro" id="IPR015947">
    <property type="entry name" value="PUA-like_sf"/>
</dbReference>
<dbReference type="InterPro" id="IPR011990">
    <property type="entry name" value="TPR-like_helical_dom_sf"/>
</dbReference>
<dbReference type="InterPro" id="IPR019734">
    <property type="entry name" value="TPR_rpt"/>
</dbReference>
<dbReference type="InterPro" id="IPR018957">
    <property type="entry name" value="Znf_C3HC4_RING-type"/>
</dbReference>
<dbReference type="InterPro" id="IPR001841">
    <property type="entry name" value="Znf_RING"/>
</dbReference>
<dbReference type="InterPro" id="IPR013083">
    <property type="entry name" value="Znf_RING/FYVE/PHD"/>
</dbReference>
<dbReference type="InterPro" id="IPR017907">
    <property type="entry name" value="Znf_RING_CS"/>
</dbReference>
<dbReference type="PANTHER" id="PTHR23327:SF4">
    <property type="entry name" value="LON PEPTIDASE N-TERMINAL DOMAIN AND RING FINGER PROTEIN 1"/>
    <property type="match status" value="1"/>
</dbReference>
<dbReference type="PANTHER" id="PTHR23327">
    <property type="entry name" value="RING FINGER PROTEIN 127"/>
    <property type="match status" value="1"/>
</dbReference>
<dbReference type="Pfam" id="PF02190">
    <property type="entry name" value="LON_substr_bdg"/>
    <property type="match status" value="1"/>
</dbReference>
<dbReference type="Pfam" id="PF00097">
    <property type="entry name" value="zf-C3HC4"/>
    <property type="match status" value="1"/>
</dbReference>
<dbReference type="Pfam" id="PF13923">
    <property type="entry name" value="zf-C3HC4_2"/>
    <property type="match status" value="1"/>
</dbReference>
<dbReference type="SMART" id="SM00464">
    <property type="entry name" value="LON"/>
    <property type="match status" value="1"/>
</dbReference>
<dbReference type="SMART" id="SM00184">
    <property type="entry name" value="RING"/>
    <property type="match status" value="2"/>
</dbReference>
<dbReference type="SMART" id="SM00028">
    <property type="entry name" value="TPR"/>
    <property type="match status" value="4"/>
</dbReference>
<dbReference type="SUPFAM" id="SSF88697">
    <property type="entry name" value="PUA domain-like"/>
    <property type="match status" value="1"/>
</dbReference>
<dbReference type="SUPFAM" id="SSF57850">
    <property type="entry name" value="RING/U-box"/>
    <property type="match status" value="2"/>
</dbReference>
<dbReference type="SUPFAM" id="SSF48452">
    <property type="entry name" value="TPR-like"/>
    <property type="match status" value="1"/>
</dbReference>
<dbReference type="PROSITE" id="PS51787">
    <property type="entry name" value="LON_N"/>
    <property type="match status" value="1"/>
</dbReference>
<dbReference type="PROSITE" id="PS50293">
    <property type="entry name" value="TPR_REGION"/>
    <property type="match status" value="1"/>
</dbReference>
<dbReference type="PROSITE" id="PS00518">
    <property type="entry name" value="ZF_RING_1"/>
    <property type="match status" value="2"/>
</dbReference>
<dbReference type="PROSITE" id="PS50089">
    <property type="entry name" value="ZF_RING_2"/>
    <property type="match status" value="2"/>
</dbReference>
<evidence type="ECO:0000250" key="1">
    <source>
        <dbReference type="UniProtKB" id="D3YY23"/>
    </source>
</evidence>
<evidence type="ECO:0000255" key="2">
    <source>
        <dbReference type="PROSITE-ProRule" id="PRU00175"/>
    </source>
</evidence>
<evidence type="ECO:0000255" key="3">
    <source>
        <dbReference type="PROSITE-ProRule" id="PRU01123"/>
    </source>
</evidence>
<evidence type="ECO:0000256" key="4">
    <source>
        <dbReference type="SAM" id="MobiDB-lite"/>
    </source>
</evidence>
<evidence type="ECO:0000303" key="5">
    <source>
    </source>
</evidence>
<evidence type="ECO:0000305" key="6"/>
<feature type="chain" id="PRO_0000277669" description="LON peptidase N-terminal domain and RING finger protein 1">
    <location>
        <begin position="1"/>
        <end position="773"/>
    </location>
</feature>
<feature type="repeat" description="TPR 1">
    <location>
        <begin position="48"/>
        <end position="81"/>
    </location>
</feature>
<feature type="repeat" description="TPR 2">
    <location>
        <begin position="212"/>
        <end position="244"/>
    </location>
</feature>
<feature type="repeat" description="TPR 3">
    <location>
        <begin position="246"/>
        <end position="278"/>
    </location>
</feature>
<feature type="repeat" description="TPR 4">
    <location>
        <begin position="279"/>
        <end position="312"/>
    </location>
</feature>
<feature type="domain" description="Lon N-terminal" evidence="3">
    <location>
        <begin position="558"/>
        <end position="768"/>
    </location>
</feature>
<feature type="zinc finger region" description="RING-type 1" evidence="2">
    <location>
        <begin position="123"/>
        <end position="159"/>
    </location>
</feature>
<feature type="zinc finger region" description="RING-type 2" evidence="2">
    <location>
        <begin position="479"/>
        <end position="517"/>
    </location>
</feature>
<feature type="region of interest" description="Disordered" evidence="4">
    <location>
        <begin position="1"/>
        <end position="29"/>
    </location>
</feature>
<feature type="region of interest" description="Disordered" evidence="4">
    <location>
        <begin position="359"/>
        <end position="388"/>
    </location>
</feature>
<feature type="compositionally biased region" description="Polar residues" evidence="4">
    <location>
        <begin position="359"/>
        <end position="370"/>
    </location>
</feature>
<feature type="modified residue" description="Phosphoserine" evidence="1">
    <location>
        <position position="431"/>
    </location>
</feature>
<feature type="splice variant" id="VSP_037971" description="In isoform 2." evidence="5">
    <location>
        <begin position="452"/>
        <end position="462"/>
    </location>
</feature>
<feature type="sequence variant" id="VAR_058706" description="In dbSNP:rs1139354.">
    <original>I</original>
    <variation>L</variation>
    <location>
        <position position="265"/>
    </location>
</feature>
<feature type="sequence conflict" description="In Ref. 2; BAG62246." evidence="6" ref="2">
    <original>I</original>
    <variation>V</variation>
    <location>
        <position position="663"/>
    </location>
</feature>
<feature type="sequence conflict" description="In Ref. 2; BAG59741." evidence="6" ref="2">
    <original>K</original>
    <variation>E</variation>
    <location>
        <position position="773"/>
    </location>
</feature>
<reference key="1">
    <citation type="journal article" date="2006" name="Nature">
        <title>DNA sequence and analysis of human chromosome 8.</title>
        <authorList>
            <person name="Nusbaum C."/>
            <person name="Mikkelsen T.S."/>
            <person name="Zody M.C."/>
            <person name="Asakawa S."/>
            <person name="Taudien S."/>
            <person name="Garber M."/>
            <person name="Kodira C.D."/>
            <person name="Schueler M.G."/>
            <person name="Shimizu A."/>
            <person name="Whittaker C.A."/>
            <person name="Chang J.L."/>
            <person name="Cuomo C.A."/>
            <person name="Dewar K."/>
            <person name="FitzGerald M.G."/>
            <person name="Yang X."/>
            <person name="Allen N.R."/>
            <person name="Anderson S."/>
            <person name="Asakawa T."/>
            <person name="Blechschmidt K."/>
            <person name="Bloom T."/>
            <person name="Borowsky M.L."/>
            <person name="Butler J."/>
            <person name="Cook A."/>
            <person name="Corum B."/>
            <person name="DeArellano K."/>
            <person name="DeCaprio D."/>
            <person name="Dooley K.T."/>
            <person name="Dorris L. III"/>
            <person name="Engels R."/>
            <person name="Gloeckner G."/>
            <person name="Hafez N."/>
            <person name="Hagopian D.S."/>
            <person name="Hall J.L."/>
            <person name="Ishikawa S.K."/>
            <person name="Jaffe D.B."/>
            <person name="Kamat A."/>
            <person name="Kudoh J."/>
            <person name="Lehmann R."/>
            <person name="Lokitsang T."/>
            <person name="Macdonald P."/>
            <person name="Major J.E."/>
            <person name="Matthews C.D."/>
            <person name="Mauceli E."/>
            <person name="Menzel U."/>
            <person name="Mihalev A.H."/>
            <person name="Minoshima S."/>
            <person name="Murayama Y."/>
            <person name="Naylor J.W."/>
            <person name="Nicol R."/>
            <person name="Nguyen C."/>
            <person name="O'Leary S.B."/>
            <person name="O'Neill K."/>
            <person name="Parker S.C.J."/>
            <person name="Polley A."/>
            <person name="Raymond C.K."/>
            <person name="Reichwald K."/>
            <person name="Rodriguez J."/>
            <person name="Sasaki T."/>
            <person name="Schilhabel M."/>
            <person name="Siddiqui R."/>
            <person name="Smith C.L."/>
            <person name="Sneddon T.P."/>
            <person name="Talamas J.A."/>
            <person name="Tenzin P."/>
            <person name="Topham K."/>
            <person name="Venkataraman V."/>
            <person name="Wen G."/>
            <person name="Yamazaki S."/>
            <person name="Young S.K."/>
            <person name="Zeng Q."/>
            <person name="Zimmer A.R."/>
            <person name="Rosenthal A."/>
            <person name="Birren B.W."/>
            <person name="Platzer M."/>
            <person name="Shimizu N."/>
            <person name="Lander E.S."/>
        </authorList>
    </citation>
    <scope>NUCLEOTIDE SEQUENCE [LARGE SCALE GENOMIC DNA]</scope>
</reference>
<reference key="2">
    <citation type="journal article" date="2004" name="Nat. Genet.">
        <title>Complete sequencing and characterization of 21,243 full-length human cDNAs.</title>
        <authorList>
            <person name="Ota T."/>
            <person name="Suzuki Y."/>
            <person name="Nishikawa T."/>
            <person name="Otsuki T."/>
            <person name="Sugiyama T."/>
            <person name="Irie R."/>
            <person name="Wakamatsu A."/>
            <person name="Hayashi K."/>
            <person name="Sato H."/>
            <person name="Nagai K."/>
            <person name="Kimura K."/>
            <person name="Makita H."/>
            <person name="Sekine M."/>
            <person name="Obayashi M."/>
            <person name="Nishi T."/>
            <person name="Shibahara T."/>
            <person name="Tanaka T."/>
            <person name="Ishii S."/>
            <person name="Yamamoto J."/>
            <person name="Saito K."/>
            <person name="Kawai Y."/>
            <person name="Isono Y."/>
            <person name="Nakamura Y."/>
            <person name="Nagahari K."/>
            <person name="Murakami K."/>
            <person name="Yasuda T."/>
            <person name="Iwayanagi T."/>
            <person name="Wagatsuma M."/>
            <person name="Shiratori A."/>
            <person name="Sudo H."/>
            <person name="Hosoiri T."/>
            <person name="Kaku Y."/>
            <person name="Kodaira H."/>
            <person name="Kondo H."/>
            <person name="Sugawara M."/>
            <person name="Takahashi M."/>
            <person name="Kanda K."/>
            <person name="Yokoi T."/>
            <person name="Furuya T."/>
            <person name="Kikkawa E."/>
            <person name="Omura Y."/>
            <person name="Abe K."/>
            <person name="Kamihara K."/>
            <person name="Katsuta N."/>
            <person name="Sato K."/>
            <person name="Tanikawa M."/>
            <person name="Yamazaki M."/>
            <person name="Ninomiya K."/>
            <person name="Ishibashi T."/>
            <person name="Yamashita H."/>
            <person name="Murakawa K."/>
            <person name="Fujimori K."/>
            <person name="Tanai H."/>
            <person name="Kimata M."/>
            <person name="Watanabe M."/>
            <person name="Hiraoka S."/>
            <person name="Chiba Y."/>
            <person name="Ishida S."/>
            <person name="Ono Y."/>
            <person name="Takiguchi S."/>
            <person name="Watanabe S."/>
            <person name="Yosida M."/>
            <person name="Hotuta T."/>
            <person name="Kusano J."/>
            <person name="Kanehori K."/>
            <person name="Takahashi-Fujii A."/>
            <person name="Hara H."/>
            <person name="Tanase T.-O."/>
            <person name="Nomura Y."/>
            <person name="Togiya S."/>
            <person name="Komai F."/>
            <person name="Hara R."/>
            <person name="Takeuchi K."/>
            <person name="Arita M."/>
            <person name="Imose N."/>
            <person name="Musashino K."/>
            <person name="Yuuki H."/>
            <person name="Oshima A."/>
            <person name="Sasaki N."/>
            <person name="Aotsuka S."/>
            <person name="Yoshikawa Y."/>
            <person name="Matsunawa H."/>
            <person name="Ichihara T."/>
            <person name="Shiohata N."/>
            <person name="Sano S."/>
            <person name="Moriya S."/>
            <person name="Momiyama H."/>
            <person name="Satoh N."/>
            <person name="Takami S."/>
            <person name="Terashima Y."/>
            <person name="Suzuki O."/>
            <person name="Nakagawa S."/>
            <person name="Senoh A."/>
            <person name="Mizoguchi H."/>
            <person name="Goto Y."/>
            <person name="Shimizu F."/>
            <person name="Wakebe H."/>
            <person name="Hishigaki H."/>
            <person name="Watanabe T."/>
            <person name="Sugiyama A."/>
            <person name="Takemoto M."/>
            <person name="Kawakami B."/>
            <person name="Yamazaki M."/>
            <person name="Watanabe K."/>
            <person name="Kumagai A."/>
            <person name="Itakura S."/>
            <person name="Fukuzumi Y."/>
            <person name="Fujimori Y."/>
            <person name="Komiyama M."/>
            <person name="Tashiro H."/>
            <person name="Tanigami A."/>
            <person name="Fujiwara T."/>
            <person name="Ono T."/>
            <person name="Yamada K."/>
            <person name="Fujii Y."/>
            <person name="Ozaki K."/>
            <person name="Hirao M."/>
            <person name="Ohmori Y."/>
            <person name="Kawabata A."/>
            <person name="Hikiji T."/>
            <person name="Kobatake N."/>
            <person name="Inagaki H."/>
            <person name="Ikema Y."/>
            <person name="Okamoto S."/>
            <person name="Okitani R."/>
            <person name="Kawakami T."/>
            <person name="Noguchi S."/>
            <person name="Itoh T."/>
            <person name="Shigeta K."/>
            <person name="Senba T."/>
            <person name="Matsumura K."/>
            <person name="Nakajima Y."/>
            <person name="Mizuno T."/>
            <person name="Morinaga M."/>
            <person name="Sasaki M."/>
            <person name="Togashi T."/>
            <person name="Oyama M."/>
            <person name="Hata H."/>
            <person name="Watanabe M."/>
            <person name="Komatsu T."/>
            <person name="Mizushima-Sugano J."/>
            <person name="Satoh T."/>
            <person name="Shirai Y."/>
            <person name="Takahashi Y."/>
            <person name="Nakagawa K."/>
            <person name="Okumura K."/>
            <person name="Nagase T."/>
            <person name="Nomura N."/>
            <person name="Kikuchi H."/>
            <person name="Masuho Y."/>
            <person name="Yamashita R."/>
            <person name="Nakai K."/>
            <person name="Yada T."/>
            <person name="Nakamura Y."/>
            <person name="Ohara O."/>
            <person name="Isogai T."/>
            <person name="Sugano S."/>
        </authorList>
    </citation>
    <scope>NUCLEOTIDE SEQUENCE [LARGE SCALE MRNA] OF 268-773 (ISOFORM 1)</scope>
    <scope>NUCLEOTIDE SEQUENCE [LARGE SCALE MRNA] OF 387-773 (ISOFORM 2)</scope>
    <source>
        <tissue>Hepatoma</tissue>
    </source>
</reference>
<reference key="3">
    <citation type="journal article" date="2004" name="Genome Res.">
        <title>The status, quality, and expansion of the NIH full-length cDNA project: the Mammalian Gene Collection (MGC).</title>
        <authorList>
            <consortium name="The MGC Project Team"/>
        </authorList>
    </citation>
    <scope>NUCLEOTIDE SEQUENCE [LARGE SCALE MRNA] OF 337-773 (ISOFORM 1)</scope>
    <source>
        <tissue>Brain</tissue>
        <tissue>Ovary</tissue>
    </source>
</reference>
<organism>
    <name type="scientific">Homo sapiens</name>
    <name type="common">Human</name>
    <dbReference type="NCBI Taxonomy" id="9606"/>
    <lineage>
        <taxon>Eukaryota</taxon>
        <taxon>Metazoa</taxon>
        <taxon>Chordata</taxon>
        <taxon>Craniata</taxon>
        <taxon>Vertebrata</taxon>
        <taxon>Euteleostomi</taxon>
        <taxon>Mammalia</taxon>
        <taxon>Eutheria</taxon>
        <taxon>Euarchontoglires</taxon>
        <taxon>Primates</taxon>
        <taxon>Haplorrhini</taxon>
        <taxon>Catarrhini</taxon>
        <taxon>Hominidae</taxon>
        <taxon>Homo</taxon>
    </lineage>
</organism>
<keyword id="KW-0025">Alternative splicing</keyword>
<keyword id="KW-0479">Metal-binding</keyword>
<keyword id="KW-0597">Phosphoprotein</keyword>
<keyword id="KW-1267">Proteomics identification</keyword>
<keyword id="KW-1185">Reference proteome</keyword>
<keyword id="KW-0677">Repeat</keyword>
<keyword id="KW-0802">TPR repeat</keyword>
<keyword id="KW-0862">Zinc</keyword>
<keyword id="KW-0863">Zinc-finger</keyword>
<sequence length="773" mass="86725">MSSPAVARTSPGGSREMAPAPQGRGRFWEVGGGSGHRLERAAAESERWELLLRRGELLALGGHLKGALEAFAAALRRGAPARPECLGALVDCLVFNYRLRHGLGWSAAPVAGADGGAGGLLRCLGCRGFLSEPVTVPCGHSYCRRCLRRELRARCRLCRDRLPPATASATDAEGTAPRPPPLAAAIAASDFRTSVVLNHLAEKWFPGQRERARAAGRLGELLHQGRYREALAAACEALRAEPSDLIVKIYRAESYAGLQEFKAAIEDLNAVLFQLPDWPEVYFRKGKVLCDAGFLGDALQLFLQCLALDEDFAPAKLQVQKILCDLLLPENLKEGLKESSWSSLPCTKNRPFDFHSVMEESQSLNEPSPKQSEEIPEVTSEPVKGSLNRAQSAQSINSTEMPAREDCLKRVSSEPVLSVQEKGVLLKRKLSLLEQDVIVNEDGRNKLKKQGETPNEVCMFSLAYGDIPEELIDVSDFECSLCMRLFFEPVTTPCGHSFCKNCLERCLDHAPYCPLCKESLKEYLADRRYCVTQLLEELIVKYLPDELSERKKIYDEETAELSHLTKNVPIFVCTMAYPTVPCPLHVFEPRYRLMIRRSIQTGTKQFGMCVSDTQNSFADYGCMLQIRNVHFLPDGRSVVDTVGGKRFRVLKRGMKDGYCTADIEYLEDVKVENEDEIKNLRELHDLVYSQACSWFQNLRDRFRSQILQHFGSMPEREENLQAAPNGPAWCWWLLAVLPVDPRYQLSVLSMKSLKERLTKIQHILTYFSRDQSK</sequence>